<feature type="chain" id="PRO_0000293238" description="Small ribosomal subunit protein uS4">
    <location>
        <begin position="1"/>
        <end position="208"/>
    </location>
</feature>
<feature type="domain" description="S4 RNA-binding" evidence="1">
    <location>
        <begin position="95"/>
        <end position="160"/>
    </location>
</feature>
<feature type="region of interest" description="Disordered" evidence="2">
    <location>
        <begin position="28"/>
        <end position="48"/>
    </location>
</feature>
<accession>A0JX91</accession>
<comment type="function">
    <text evidence="1">One of the primary rRNA binding proteins, it binds directly to 16S rRNA where it nucleates assembly of the body of the 30S subunit.</text>
</comment>
<comment type="function">
    <text evidence="1">With S5 and S12 plays an important role in translational accuracy.</text>
</comment>
<comment type="subunit">
    <text evidence="1">Part of the 30S ribosomal subunit. Contacts protein S5. The interaction surface between S4 and S5 is involved in control of translational fidelity.</text>
</comment>
<comment type="similarity">
    <text evidence="1">Belongs to the universal ribosomal protein uS4 family.</text>
</comment>
<protein>
    <recommendedName>
        <fullName evidence="1">Small ribosomal subunit protein uS4</fullName>
    </recommendedName>
    <alternativeName>
        <fullName evidence="3">30S ribosomal protein S4</fullName>
    </alternativeName>
</protein>
<reference key="1">
    <citation type="journal article" date="2013" name="Stand. Genomic Sci.">
        <title>Complete genome sequence of Arthrobacter sp. strain FB24.</title>
        <authorList>
            <person name="Nakatsu C.H."/>
            <person name="Barabote R."/>
            <person name="Thompson S."/>
            <person name="Bruce D."/>
            <person name="Detter C."/>
            <person name="Brettin T."/>
            <person name="Han C."/>
            <person name="Beasley F."/>
            <person name="Chen W."/>
            <person name="Konopka A."/>
            <person name="Xie G."/>
        </authorList>
    </citation>
    <scope>NUCLEOTIDE SEQUENCE [LARGE SCALE GENOMIC DNA]</scope>
    <source>
        <strain>FB24</strain>
    </source>
</reference>
<keyword id="KW-1185">Reference proteome</keyword>
<keyword id="KW-0687">Ribonucleoprotein</keyword>
<keyword id="KW-0689">Ribosomal protein</keyword>
<keyword id="KW-0694">RNA-binding</keyword>
<keyword id="KW-0699">rRNA-binding</keyword>
<organism>
    <name type="scientific">Arthrobacter sp. (strain FB24)</name>
    <dbReference type="NCBI Taxonomy" id="290399"/>
    <lineage>
        <taxon>Bacteria</taxon>
        <taxon>Bacillati</taxon>
        <taxon>Actinomycetota</taxon>
        <taxon>Actinomycetes</taxon>
        <taxon>Micrococcales</taxon>
        <taxon>Micrococcaceae</taxon>
        <taxon>Arthrobacter</taxon>
    </lineage>
</organism>
<evidence type="ECO:0000255" key="1">
    <source>
        <dbReference type="HAMAP-Rule" id="MF_01306"/>
    </source>
</evidence>
<evidence type="ECO:0000256" key="2">
    <source>
        <dbReference type="SAM" id="MobiDB-lite"/>
    </source>
</evidence>
<evidence type="ECO:0000305" key="3"/>
<proteinExistence type="inferred from homology"/>
<gene>
    <name evidence="1" type="primary">rpsD</name>
    <name type="ordered locus">Arth_2281</name>
</gene>
<sequence>MANNTRARRTARLSRALGIALTPKAAKYMERRPYGPGEHGRARKKQDSDYAVRLREKQRLRAQYGIREAQMTRAFEEARRTKGLTGENLIELLEMRLDALVLRAGFARTIAQARQLVVHRHILVDGIRVDRPSFRVGEGQLVHVHSRSETMPPFQVAAAGAHRDVLPQVPAYLDVKLDALQARLVRRPKRSEVPVTCEEQLVVEFYAR</sequence>
<name>RS4_ARTS2</name>
<dbReference type="EMBL" id="CP000454">
    <property type="protein sequence ID" value="ABK03661.1"/>
    <property type="molecule type" value="Genomic_DNA"/>
</dbReference>
<dbReference type="RefSeq" id="WP_011692125.1">
    <property type="nucleotide sequence ID" value="NC_008541.1"/>
</dbReference>
<dbReference type="SMR" id="A0JX91"/>
<dbReference type="STRING" id="290399.Arth_2281"/>
<dbReference type="KEGG" id="art:Arth_2281"/>
<dbReference type="eggNOG" id="COG0522">
    <property type="taxonomic scope" value="Bacteria"/>
</dbReference>
<dbReference type="HOGENOM" id="CLU_092403_0_3_11"/>
<dbReference type="OrthoDB" id="9803672at2"/>
<dbReference type="Proteomes" id="UP000000754">
    <property type="component" value="Chromosome"/>
</dbReference>
<dbReference type="GO" id="GO:0015935">
    <property type="term" value="C:small ribosomal subunit"/>
    <property type="evidence" value="ECO:0007669"/>
    <property type="project" value="InterPro"/>
</dbReference>
<dbReference type="GO" id="GO:0019843">
    <property type="term" value="F:rRNA binding"/>
    <property type="evidence" value="ECO:0007669"/>
    <property type="project" value="UniProtKB-UniRule"/>
</dbReference>
<dbReference type="GO" id="GO:0003735">
    <property type="term" value="F:structural constituent of ribosome"/>
    <property type="evidence" value="ECO:0007669"/>
    <property type="project" value="InterPro"/>
</dbReference>
<dbReference type="GO" id="GO:0042274">
    <property type="term" value="P:ribosomal small subunit biogenesis"/>
    <property type="evidence" value="ECO:0007669"/>
    <property type="project" value="TreeGrafter"/>
</dbReference>
<dbReference type="GO" id="GO:0006412">
    <property type="term" value="P:translation"/>
    <property type="evidence" value="ECO:0007669"/>
    <property type="project" value="UniProtKB-UniRule"/>
</dbReference>
<dbReference type="CDD" id="cd00165">
    <property type="entry name" value="S4"/>
    <property type="match status" value="1"/>
</dbReference>
<dbReference type="FunFam" id="3.10.290.10:FF:000001">
    <property type="entry name" value="30S ribosomal protein S4"/>
    <property type="match status" value="1"/>
</dbReference>
<dbReference type="Gene3D" id="1.10.1050.10">
    <property type="entry name" value="Ribosomal Protein S4 Delta 41, Chain A, domain 1"/>
    <property type="match status" value="1"/>
</dbReference>
<dbReference type="Gene3D" id="3.10.290.10">
    <property type="entry name" value="RNA-binding S4 domain"/>
    <property type="match status" value="1"/>
</dbReference>
<dbReference type="HAMAP" id="MF_01306_B">
    <property type="entry name" value="Ribosomal_uS4_B"/>
    <property type="match status" value="1"/>
</dbReference>
<dbReference type="InterPro" id="IPR022801">
    <property type="entry name" value="Ribosomal_uS4"/>
</dbReference>
<dbReference type="InterPro" id="IPR005709">
    <property type="entry name" value="Ribosomal_uS4_bac-type"/>
</dbReference>
<dbReference type="InterPro" id="IPR018079">
    <property type="entry name" value="Ribosomal_uS4_CS"/>
</dbReference>
<dbReference type="InterPro" id="IPR001912">
    <property type="entry name" value="Ribosomal_uS4_N"/>
</dbReference>
<dbReference type="InterPro" id="IPR002942">
    <property type="entry name" value="S4_RNA-bd"/>
</dbReference>
<dbReference type="InterPro" id="IPR036986">
    <property type="entry name" value="S4_RNA-bd_sf"/>
</dbReference>
<dbReference type="NCBIfam" id="NF003717">
    <property type="entry name" value="PRK05327.1"/>
    <property type="match status" value="1"/>
</dbReference>
<dbReference type="NCBIfam" id="TIGR01017">
    <property type="entry name" value="rpsD_bact"/>
    <property type="match status" value="1"/>
</dbReference>
<dbReference type="PANTHER" id="PTHR11831">
    <property type="entry name" value="30S 40S RIBOSOMAL PROTEIN"/>
    <property type="match status" value="1"/>
</dbReference>
<dbReference type="PANTHER" id="PTHR11831:SF4">
    <property type="entry name" value="SMALL RIBOSOMAL SUBUNIT PROTEIN US4M"/>
    <property type="match status" value="1"/>
</dbReference>
<dbReference type="Pfam" id="PF00163">
    <property type="entry name" value="Ribosomal_S4"/>
    <property type="match status" value="1"/>
</dbReference>
<dbReference type="Pfam" id="PF01479">
    <property type="entry name" value="S4"/>
    <property type="match status" value="1"/>
</dbReference>
<dbReference type="SMART" id="SM01390">
    <property type="entry name" value="Ribosomal_S4"/>
    <property type="match status" value="1"/>
</dbReference>
<dbReference type="SMART" id="SM00363">
    <property type="entry name" value="S4"/>
    <property type="match status" value="1"/>
</dbReference>
<dbReference type="SUPFAM" id="SSF55174">
    <property type="entry name" value="Alpha-L RNA-binding motif"/>
    <property type="match status" value="1"/>
</dbReference>
<dbReference type="PROSITE" id="PS00632">
    <property type="entry name" value="RIBOSOMAL_S4"/>
    <property type="match status" value="1"/>
</dbReference>
<dbReference type="PROSITE" id="PS50889">
    <property type="entry name" value="S4"/>
    <property type="match status" value="1"/>
</dbReference>